<reference key="1">
    <citation type="journal article" date="1996" name="Science">
        <title>Complete genome sequence of the methanogenic archaeon, Methanococcus jannaschii.</title>
        <authorList>
            <person name="Bult C.J."/>
            <person name="White O."/>
            <person name="Olsen G.J."/>
            <person name="Zhou L."/>
            <person name="Fleischmann R.D."/>
            <person name="Sutton G.G."/>
            <person name="Blake J.A."/>
            <person name="FitzGerald L.M."/>
            <person name="Clayton R.A."/>
            <person name="Gocayne J.D."/>
            <person name="Kerlavage A.R."/>
            <person name="Dougherty B.A."/>
            <person name="Tomb J.-F."/>
            <person name="Adams M.D."/>
            <person name="Reich C.I."/>
            <person name="Overbeek R."/>
            <person name="Kirkness E.F."/>
            <person name="Weinstock K.G."/>
            <person name="Merrick J.M."/>
            <person name="Glodek A."/>
            <person name="Scott J.L."/>
            <person name="Geoghagen N.S.M."/>
            <person name="Weidman J.F."/>
            <person name="Fuhrmann J.L."/>
            <person name="Nguyen D."/>
            <person name="Utterback T.R."/>
            <person name="Kelley J.M."/>
            <person name="Peterson J.D."/>
            <person name="Sadow P.W."/>
            <person name="Hanna M.C."/>
            <person name="Cotton M.D."/>
            <person name="Roberts K.M."/>
            <person name="Hurst M.A."/>
            <person name="Kaine B.P."/>
            <person name="Borodovsky M."/>
            <person name="Klenk H.-P."/>
            <person name="Fraser C.M."/>
            <person name="Smith H.O."/>
            <person name="Woese C.R."/>
            <person name="Venter J.C."/>
        </authorList>
    </citation>
    <scope>NUCLEOTIDE SEQUENCE [LARGE SCALE GENOMIC DNA]</scope>
    <source>
        <strain>ATCC 43067 / DSM 2661 / JAL-1 / JCM 10045 / NBRC 100440</strain>
    </source>
</reference>
<reference key="2">
    <citation type="journal article" date="2003" name="FEBS Lett.">
        <title>MjK1, a K+ channel from M. jannaschii, mediates K+ uptake and K+ sensitivity in E. coli.</title>
        <authorList>
            <person name="Hellmer J."/>
            <person name="Zeilinger C."/>
        </authorList>
    </citation>
    <scope>FUNCTION</scope>
    <source>
        <strain>ATCC 43067 / DSM 2661 / JAL-1 / JCM 10045 / NBRC 100440</strain>
    </source>
</reference>
<sequence>METYEKIELGIIVIILLILIESVILMTVEGWDFFTAFYTAVVTISTVGYGDYTPQTFLGKLSVIIYIFAGVGAVAYTMGNIASFFIEGHFRKYFRLRKMMDRIKKLNNHYIICGYGRLGKVIAEEFKKCNIPFVIIDSDEKLLEEALEKDPNLICIVGDATSDDILKKAKIEKAKGLISVVSSDAENVFITLSAKKLNPNIYIVAKAEKPSTLDKLIKAGADRAVCPYIVGGMEIARIAINPDIVEFIHSLVATEEDMEVRRYIVKNKELDNKLLKDSGIREKTGATILAVKKGDKTITSPPPDTVINIGDIIYAFGTKEQLEKLKRYVEGVE</sequence>
<feature type="chain" id="PRO_0000054099" description="Potassium channel protein 1">
    <location>
        <begin position="1"/>
        <end position="333"/>
    </location>
</feature>
<feature type="topological domain" description="Cytoplasmic" evidence="2">
    <location>
        <begin position="1"/>
        <end position="6"/>
    </location>
</feature>
<feature type="transmembrane region" description="Helical" evidence="2">
    <location>
        <begin position="7"/>
        <end position="27"/>
    </location>
</feature>
<feature type="topological domain" description="Extracellular" evidence="2">
    <location>
        <begin position="28"/>
        <end position="60"/>
    </location>
</feature>
<feature type="transmembrane region" description="Helical" evidence="2">
    <location>
        <begin position="61"/>
        <end position="81"/>
    </location>
</feature>
<feature type="topological domain" description="Cytoplasmic" evidence="2">
    <location>
        <begin position="82"/>
        <end position="333"/>
    </location>
</feature>
<feature type="domain" description="RCK N-terminal" evidence="3">
    <location>
        <begin position="107"/>
        <end position="229"/>
    </location>
</feature>
<feature type="domain" description="RCK C-terminal" evidence="4">
    <location>
        <begin position="246"/>
        <end position="331"/>
    </location>
</feature>
<feature type="short sequence motif" description="Selectivity filter" evidence="1">
    <location>
        <begin position="46"/>
        <end position="51"/>
    </location>
</feature>
<evidence type="ECO:0000250" key="1"/>
<evidence type="ECO:0000255" key="2"/>
<evidence type="ECO:0000255" key="3">
    <source>
        <dbReference type="PROSITE-ProRule" id="PRU00543"/>
    </source>
</evidence>
<evidence type="ECO:0000255" key="4">
    <source>
        <dbReference type="PROSITE-ProRule" id="PRU00544"/>
    </source>
</evidence>
<evidence type="ECO:0000269" key="5">
    <source>
    </source>
</evidence>
<evidence type="ECO:0000305" key="6"/>
<accession>Q57604</accession>
<keyword id="KW-1003">Cell membrane</keyword>
<keyword id="KW-0407">Ion channel</keyword>
<keyword id="KW-0406">Ion transport</keyword>
<keyword id="KW-0472">Membrane</keyword>
<keyword id="KW-0630">Potassium</keyword>
<keyword id="KW-0631">Potassium channel</keyword>
<keyword id="KW-0633">Potassium transport</keyword>
<keyword id="KW-1185">Reference proteome</keyword>
<keyword id="KW-0812">Transmembrane</keyword>
<keyword id="KW-1133">Transmembrane helix</keyword>
<keyword id="KW-0813">Transport</keyword>
<dbReference type="EMBL" id="L77117">
    <property type="protein sequence ID" value="AAB98130.1"/>
    <property type="molecule type" value="Genomic_DNA"/>
</dbReference>
<dbReference type="PIR" id="D64317">
    <property type="entry name" value="D64317"/>
</dbReference>
<dbReference type="RefSeq" id="WP_010869633.1">
    <property type="nucleotide sequence ID" value="NC_000909.1"/>
</dbReference>
<dbReference type="SMR" id="Q57604"/>
<dbReference type="FunCoup" id="Q57604">
    <property type="interactions" value="2"/>
</dbReference>
<dbReference type="STRING" id="243232.MJ_0138.1"/>
<dbReference type="TCDB" id="1.A.1.13.8">
    <property type="family name" value="the voltage-gated ion channel (vic) superfamily"/>
</dbReference>
<dbReference type="PaxDb" id="243232-MJ_0138.1"/>
<dbReference type="EnsemblBacteria" id="AAB98130">
    <property type="protein sequence ID" value="AAB98130"/>
    <property type="gene ID" value="MJ_0138.1"/>
</dbReference>
<dbReference type="GeneID" id="1450981"/>
<dbReference type="KEGG" id="mja:MJ_0138.1"/>
<dbReference type="eggNOG" id="arCOG01958">
    <property type="taxonomic scope" value="Archaea"/>
</dbReference>
<dbReference type="HOGENOM" id="CLU_050982_0_1_2"/>
<dbReference type="InParanoid" id="Q57604"/>
<dbReference type="OrthoDB" id="43518at2157"/>
<dbReference type="PhylomeDB" id="Q57604"/>
<dbReference type="Proteomes" id="UP000000805">
    <property type="component" value="Chromosome"/>
</dbReference>
<dbReference type="GO" id="GO:0005886">
    <property type="term" value="C:plasma membrane"/>
    <property type="evidence" value="ECO:0007669"/>
    <property type="project" value="UniProtKB-SubCell"/>
</dbReference>
<dbReference type="GO" id="GO:0005267">
    <property type="term" value="F:potassium channel activity"/>
    <property type="evidence" value="ECO:0007669"/>
    <property type="project" value="UniProtKB-KW"/>
</dbReference>
<dbReference type="Gene3D" id="1.10.287.70">
    <property type="match status" value="1"/>
</dbReference>
<dbReference type="Gene3D" id="3.40.50.720">
    <property type="entry name" value="NAD(P)-binding Rossmann-like Domain"/>
    <property type="match status" value="1"/>
</dbReference>
<dbReference type="Gene3D" id="3.30.70.1450">
    <property type="entry name" value="Regulator of K+ conductance, C-terminal domain"/>
    <property type="match status" value="1"/>
</dbReference>
<dbReference type="InterPro" id="IPR003280">
    <property type="entry name" value="2pore_dom_K_chnl"/>
</dbReference>
<dbReference type="InterPro" id="IPR013099">
    <property type="entry name" value="K_chnl_dom"/>
</dbReference>
<dbReference type="InterPro" id="IPR036291">
    <property type="entry name" value="NAD(P)-bd_dom_sf"/>
</dbReference>
<dbReference type="InterPro" id="IPR006037">
    <property type="entry name" value="RCK_C"/>
</dbReference>
<dbReference type="InterPro" id="IPR036721">
    <property type="entry name" value="RCK_C_sf"/>
</dbReference>
<dbReference type="InterPro" id="IPR003148">
    <property type="entry name" value="RCK_N"/>
</dbReference>
<dbReference type="InterPro" id="IPR050721">
    <property type="entry name" value="Trk_Ktr_HKT_K-transport"/>
</dbReference>
<dbReference type="PANTHER" id="PTHR43833:SF13">
    <property type="entry name" value="POTASSIUM CHANNEL PROTEIN 2-RELATED"/>
    <property type="match status" value="1"/>
</dbReference>
<dbReference type="PANTHER" id="PTHR43833">
    <property type="entry name" value="POTASSIUM CHANNEL PROTEIN 2-RELATED-RELATED"/>
    <property type="match status" value="1"/>
</dbReference>
<dbReference type="Pfam" id="PF07885">
    <property type="entry name" value="Ion_trans_2"/>
    <property type="match status" value="1"/>
</dbReference>
<dbReference type="Pfam" id="PF02080">
    <property type="entry name" value="TrkA_C"/>
    <property type="match status" value="1"/>
</dbReference>
<dbReference type="Pfam" id="PF02254">
    <property type="entry name" value="TrkA_N"/>
    <property type="match status" value="1"/>
</dbReference>
<dbReference type="PRINTS" id="PR01333">
    <property type="entry name" value="2POREKCHANEL"/>
</dbReference>
<dbReference type="SUPFAM" id="SSF51735">
    <property type="entry name" value="NAD(P)-binding Rossmann-fold domains"/>
    <property type="match status" value="1"/>
</dbReference>
<dbReference type="SUPFAM" id="SSF116726">
    <property type="entry name" value="TrkA C-terminal domain-like"/>
    <property type="match status" value="1"/>
</dbReference>
<dbReference type="SUPFAM" id="SSF81324">
    <property type="entry name" value="Voltage-gated potassium channels"/>
    <property type="match status" value="1"/>
</dbReference>
<dbReference type="PROSITE" id="PS51202">
    <property type="entry name" value="RCK_C"/>
    <property type="match status" value="1"/>
</dbReference>
<dbReference type="PROSITE" id="PS51201">
    <property type="entry name" value="RCK_N"/>
    <property type="match status" value="1"/>
</dbReference>
<name>MJK1_METJA</name>
<proteinExistence type="predicted"/>
<comment type="function">
    <text evidence="5">Potassium channel protein. Seems to conduct potassium at low membrane potentials.</text>
</comment>
<comment type="subunit">
    <text evidence="6">Homotetramer.</text>
</comment>
<comment type="subcellular location">
    <subcellularLocation>
        <location evidence="6">Cell membrane</location>
        <topology evidence="6">Multi-pass membrane protein</topology>
    </subcellularLocation>
</comment>
<comment type="miscellaneous">
    <text>Inhibited by barium and cesium.</text>
</comment>
<organism>
    <name type="scientific">Methanocaldococcus jannaschii (strain ATCC 43067 / DSM 2661 / JAL-1 / JCM 10045 / NBRC 100440)</name>
    <name type="common">Methanococcus jannaschii</name>
    <dbReference type="NCBI Taxonomy" id="243232"/>
    <lineage>
        <taxon>Archaea</taxon>
        <taxon>Methanobacteriati</taxon>
        <taxon>Methanobacteriota</taxon>
        <taxon>Methanomada group</taxon>
        <taxon>Methanococci</taxon>
        <taxon>Methanococcales</taxon>
        <taxon>Methanocaldococcaceae</taxon>
        <taxon>Methanocaldococcus</taxon>
    </lineage>
</organism>
<gene>
    <name type="ordered locus">MJ0138.1</name>
</gene>
<protein>
    <recommendedName>
        <fullName>Potassium channel protein 1</fullName>
    </recommendedName>
    <alternativeName>
        <fullName>MjK1</fullName>
    </alternativeName>
</protein>